<evidence type="ECO:0000250" key="1">
    <source>
        <dbReference type="UniProtKB" id="P19518"/>
    </source>
</evidence>
<evidence type="ECO:0000255" key="2"/>
<evidence type="ECO:0000305" key="3"/>
<feature type="chain" id="PRO_0000261025" description="Voltage-dependent calcium channel gamma-1 subunit">
    <location>
        <begin position="1"/>
        <end position="223"/>
    </location>
</feature>
<feature type="topological domain" description="Cytoplasmic" evidence="3">
    <location>
        <begin position="1"/>
        <end position="10"/>
    </location>
</feature>
<feature type="transmembrane region" description="Helical" evidence="1">
    <location>
        <begin position="11"/>
        <end position="29"/>
    </location>
</feature>
<feature type="topological domain" description="Extracellular" evidence="3">
    <location>
        <begin position="30"/>
        <end position="109"/>
    </location>
</feature>
<feature type="transmembrane region" description="Helical" evidence="1">
    <location>
        <begin position="110"/>
        <end position="130"/>
    </location>
</feature>
<feature type="topological domain" description="Cytoplasmic" evidence="3">
    <location>
        <begin position="131"/>
        <end position="135"/>
    </location>
</feature>
<feature type="transmembrane region" description="Helical" evidence="1">
    <location>
        <begin position="136"/>
        <end position="156"/>
    </location>
</feature>
<feature type="topological domain" description="Extracellular" evidence="3">
    <location>
        <begin position="157"/>
        <end position="180"/>
    </location>
</feature>
<feature type="transmembrane region" description="Helical" evidence="1">
    <location>
        <begin position="181"/>
        <end position="205"/>
    </location>
</feature>
<feature type="topological domain" description="Cytoplasmic" evidence="3">
    <location>
        <begin position="206"/>
        <end position="223"/>
    </location>
</feature>
<feature type="glycosylation site" description="N-linked (GlcNAc...) asparagine" evidence="2">
    <location>
        <position position="43"/>
    </location>
</feature>
<feature type="glycosylation site" description="N-linked (GlcNAc...) asparagine" evidence="2">
    <location>
        <position position="80"/>
    </location>
</feature>
<feature type="disulfide bond" evidence="1">
    <location>
        <begin position="57"/>
        <end position="81"/>
    </location>
</feature>
<name>CCG1_BOVIN</name>
<proteinExistence type="evidence at transcript level"/>
<accession>Q08DE1</accession>
<comment type="function">
    <text evidence="1">Regulatory subunit of the voltage-gated calcium channel that gives rise to L-type calcium currents in skeletal muscle. Regulates channel inactivation kinetics.</text>
</comment>
<comment type="subunit">
    <text evidence="1">Component of a calcium channel complex consisting of a pore-forming alpha subunit (CACNA1S) and the ancillary subunits CACNB1 or CACNB2, CACNG1 and CACNA2D1. The channel complex contains alpha, beta, gamma and delta subunits in a 1:1:1:1 ratio, i.e. it contains either CACNB1 or CACNB2.</text>
</comment>
<comment type="subcellular location">
    <subcellularLocation>
        <location evidence="1">Cell membrane</location>
        <location evidence="1">Sarcolemma</location>
        <topology evidence="1">Multi-pass membrane protein</topology>
    </subcellularLocation>
</comment>
<comment type="PTM">
    <text evidence="1">N-glycosylated.</text>
</comment>
<comment type="similarity">
    <text evidence="3">Belongs to the PMP-22/EMP/MP20 family. CACNG subfamily.</text>
</comment>
<organism>
    <name type="scientific">Bos taurus</name>
    <name type="common">Bovine</name>
    <dbReference type="NCBI Taxonomy" id="9913"/>
    <lineage>
        <taxon>Eukaryota</taxon>
        <taxon>Metazoa</taxon>
        <taxon>Chordata</taxon>
        <taxon>Craniata</taxon>
        <taxon>Vertebrata</taxon>
        <taxon>Euteleostomi</taxon>
        <taxon>Mammalia</taxon>
        <taxon>Eutheria</taxon>
        <taxon>Laurasiatheria</taxon>
        <taxon>Artiodactyla</taxon>
        <taxon>Ruminantia</taxon>
        <taxon>Pecora</taxon>
        <taxon>Bovidae</taxon>
        <taxon>Bovinae</taxon>
        <taxon>Bos</taxon>
    </lineage>
</organism>
<protein>
    <recommendedName>
        <fullName>Voltage-dependent calcium channel gamma-1 subunit</fullName>
    </recommendedName>
    <alternativeName>
        <fullName>Dihydropyridine-sensitive L-type, skeletal muscle calcium channel subunit gamma</fullName>
    </alternativeName>
</protein>
<keyword id="KW-0106">Calcium</keyword>
<keyword id="KW-0107">Calcium channel</keyword>
<keyword id="KW-0109">Calcium transport</keyword>
<keyword id="KW-1003">Cell membrane</keyword>
<keyword id="KW-1015">Disulfide bond</keyword>
<keyword id="KW-0325">Glycoprotein</keyword>
<keyword id="KW-0407">Ion channel</keyword>
<keyword id="KW-0406">Ion transport</keyword>
<keyword id="KW-0472">Membrane</keyword>
<keyword id="KW-1185">Reference proteome</keyword>
<keyword id="KW-0812">Transmembrane</keyword>
<keyword id="KW-1133">Transmembrane helix</keyword>
<keyword id="KW-0813">Transport</keyword>
<keyword id="KW-0851">Voltage-gated channel</keyword>
<gene>
    <name type="primary">CACNG1</name>
</gene>
<reference key="1">
    <citation type="submission" date="2006-09" db="EMBL/GenBank/DDBJ databases">
        <authorList>
            <consortium name="NIH - Mammalian Gene Collection (MGC) project"/>
        </authorList>
    </citation>
    <scope>NUCLEOTIDE SEQUENCE [LARGE SCALE MRNA]</scope>
    <source>
        <strain>Hereford</strain>
        <tissue>Fetal muscle</tissue>
    </source>
</reference>
<dbReference type="EMBL" id="BC123800">
    <property type="protein sequence ID" value="AAI23801.1"/>
    <property type="molecule type" value="mRNA"/>
</dbReference>
<dbReference type="RefSeq" id="NP_001073806.1">
    <property type="nucleotide sequence ID" value="NM_001080337.1"/>
</dbReference>
<dbReference type="SMR" id="Q08DE1"/>
<dbReference type="FunCoup" id="Q08DE1">
    <property type="interactions" value="471"/>
</dbReference>
<dbReference type="STRING" id="9913.ENSBTAP00000009930"/>
<dbReference type="GlyCosmos" id="Q08DE1">
    <property type="glycosylation" value="2 sites, No reported glycans"/>
</dbReference>
<dbReference type="GlyGen" id="Q08DE1">
    <property type="glycosylation" value="2 sites"/>
</dbReference>
<dbReference type="PaxDb" id="9913-ENSBTAP00000009930"/>
<dbReference type="Ensembl" id="ENSBTAT00000009930.6">
    <property type="protein sequence ID" value="ENSBTAP00000009930.4"/>
    <property type="gene ID" value="ENSBTAG00000007547.7"/>
</dbReference>
<dbReference type="GeneID" id="781184"/>
<dbReference type="KEGG" id="bta:781184"/>
<dbReference type="CTD" id="786"/>
<dbReference type="VEuPathDB" id="HostDB:ENSBTAG00000007547"/>
<dbReference type="VGNC" id="VGNC:26686">
    <property type="gene designation" value="CACNG1"/>
</dbReference>
<dbReference type="eggNOG" id="ENOG502QT5N">
    <property type="taxonomic scope" value="Eukaryota"/>
</dbReference>
<dbReference type="GeneTree" id="ENSGT00390000007786"/>
<dbReference type="HOGENOM" id="CLU_093876_0_0_1"/>
<dbReference type="InParanoid" id="Q08DE1"/>
<dbReference type="OMA" id="KRIVMTD"/>
<dbReference type="OrthoDB" id="9937541at2759"/>
<dbReference type="TreeFam" id="TF331651"/>
<dbReference type="Proteomes" id="UP000009136">
    <property type="component" value="Chromosome 19"/>
</dbReference>
<dbReference type="Bgee" id="ENSBTAG00000007547">
    <property type="expression patterns" value="Expressed in laryngeal cartilage and 31 other cell types or tissues"/>
</dbReference>
<dbReference type="GO" id="GO:1990454">
    <property type="term" value="C:L-type voltage-gated calcium channel complex"/>
    <property type="evidence" value="ECO:0000250"/>
    <property type="project" value="UniProtKB"/>
</dbReference>
<dbReference type="GO" id="GO:0005886">
    <property type="term" value="C:plasma membrane"/>
    <property type="evidence" value="ECO:0000250"/>
    <property type="project" value="UniProtKB"/>
</dbReference>
<dbReference type="GO" id="GO:0042383">
    <property type="term" value="C:sarcolemma"/>
    <property type="evidence" value="ECO:0000250"/>
    <property type="project" value="UniProtKB"/>
</dbReference>
<dbReference type="GO" id="GO:0030315">
    <property type="term" value="C:T-tubule"/>
    <property type="evidence" value="ECO:0000250"/>
    <property type="project" value="UniProtKB"/>
</dbReference>
<dbReference type="GO" id="GO:0005246">
    <property type="term" value="F:calcium channel regulator activity"/>
    <property type="evidence" value="ECO:0000250"/>
    <property type="project" value="UniProtKB"/>
</dbReference>
<dbReference type="GO" id="GO:0005245">
    <property type="term" value="F:voltage-gated calcium channel activity"/>
    <property type="evidence" value="ECO:0007669"/>
    <property type="project" value="Ensembl"/>
</dbReference>
<dbReference type="GO" id="GO:0051649">
    <property type="term" value="P:establishment of localization in cell"/>
    <property type="evidence" value="ECO:0007669"/>
    <property type="project" value="Ensembl"/>
</dbReference>
<dbReference type="GO" id="GO:1902514">
    <property type="term" value="P:regulation of calcium ion transmembrane transport via high voltage-gated calcium channel"/>
    <property type="evidence" value="ECO:0000250"/>
    <property type="project" value="UniProtKB"/>
</dbReference>
<dbReference type="GO" id="GO:0070296">
    <property type="term" value="P:sarcoplasmic reticulum calcium ion transport"/>
    <property type="evidence" value="ECO:0007669"/>
    <property type="project" value="Ensembl"/>
</dbReference>
<dbReference type="FunFam" id="1.20.140.150:FF:000031">
    <property type="entry name" value="Voltage-dependent calcium channel gamma-1 subunit"/>
    <property type="match status" value="1"/>
</dbReference>
<dbReference type="Gene3D" id="1.20.140.150">
    <property type="match status" value="1"/>
</dbReference>
<dbReference type="InterPro" id="IPR004031">
    <property type="entry name" value="PMP22/EMP/MP20/Claudin"/>
</dbReference>
<dbReference type="InterPro" id="IPR005421">
    <property type="entry name" value="VDCC_g1su"/>
</dbReference>
<dbReference type="InterPro" id="IPR008368">
    <property type="entry name" value="VDCC_gsu"/>
</dbReference>
<dbReference type="PANTHER" id="PTHR15025:SF1">
    <property type="entry name" value="VOLTAGE-DEPENDENT CALCIUM CHANNEL GAMMA-1 SUBUNIT"/>
    <property type="match status" value="1"/>
</dbReference>
<dbReference type="PANTHER" id="PTHR15025">
    <property type="entry name" value="VOLTAGE-DEPENDENT CALCIUM CHANNEL GAMMA-1 SUBUNIT-RELATED"/>
    <property type="match status" value="1"/>
</dbReference>
<dbReference type="Pfam" id="PF13903">
    <property type="entry name" value="Claudin_2"/>
    <property type="match status" value="1"/>
</dbReference>
<dbReference type="PRINTS" id="PR01792">
    <property type="entry name" value="VDCCGAMMA"/>
</dbReference>
<dbReference type="PRINTS" id="PR01601">
    <property type="entry name" value="VDCCGAMMA1"/>
</dbReference>
<sequence length="223" mass="24694">MSQTKTLKVRVALLCILVGIVLALVAVVTDHWAVLSPHVEHHNSTCEAAHFGLWRICTKRIFVGDKERSCGPITLPGEKNCSYFRHFNPGESSEIFEVTTQKEYSISAAAIAIFSLGFIIVGTLCALLSFRKKRDYLLRPASMFYIFAGLCLSVSAEVMRQSVQRMVDSEHTAWIAHSLAWSFICACVAAALLLVGGLALLLLALPRMPRDPWESCMDAEPEH</sequence>